<dbReference type="EC" id="2.1.1.33" evidence="1"/>
<dbReference type="EMBL" id="AE001439">
    <property type="protein sequence ID" value="AAD06272.1"/>
    <property type="molecule type" value="Genomic_DNA"/>
</dbReference>
<dbReference type="PIR" id="D71900">
    <property type="entry name" value="D71900"/>
</dbReference>
<dbReference type="RefSeq" id="WP_001119966.1">
    <property type="nucleotide sequence ID" value="NC_000921.1"/>
</dbReference>
<dbReference type="SMR" id="Q9ZL96"/>
<dbReference type="KEGG" id="hpj:jhp_0684"/>
<dbReference type="eggNOG" id="COG0220">
    <property type="taxonomic scope" value="Bacteria"/>
</dbReference>
<dbReference type="UniPathway" id="UPA00989"/>
<dbReference type="Proteomes" id="UP000000804">
    <property type="component" value="Chromosome"/>
</dbReference>
<dbReference type="GO" id="GO:0043527">
    <property type="term" value="C:tRNA methyltransferase complex"/>
    <property type="evidence" value="ECO:0007669"/>
    <property type="project" value="TreeGrafter"/>
</dbReference>
<dbReference type="GO" id="GO:0008176">
    <property type="term" value="F:tRNA (guanine(46)-N7)-methyltransferase activity"/>
    <property type="evidence" value="ECO:0007669"/>
    <property type="project" value="UniProtKB-UniRule"/>
</dbReference>
<dbReference type="CDD" id="cd02440">
    <property type="entry name" value="AdoMet_MTases"/>
    <property type="match status" value="1"/>
</dbReference>
<dbReference type="FunFam" id="3.40.50.150:FF:000506">
    <property type="entry name" value="tRNA (guanine-N(7)-)-methyltransferase"/>
    <property type="match status" value="1"/>
</dbReference>
<dbReference type="Gene3D" id="3.40.50.150">
    <property type="entry name" value="Vaccinia Virus protein VP39"/>
    <property type="match status" value="1"/>
</dbReference>
<dbReference type="HAMAP" id="MF_01057">
    <property type="entry name" value="tRNA_methyltr_TrmB"/>
    <property type="match status" value="1"/>
</dbReference>
<dbReference type="InterPro" id="IPR029063">
    <property type="entry name" value="SAM-dependent_MTases_sf"/>
</dbReference>
<dbReference type="InterPro" id="IPR003358">
    <property type="entry name" value="tRNA_(Gua-N-7)_MeTrfase_Trmb"/>
</dbReference>
<dbReference type="InterPro" id="IPR055361">
    <property type="entry name" value="tRNA_methyltr_TrmB_bact"/>
</dbReference>
<dbReference type="NCBIfam" id="NF010719">
    <property type="entry name" value="PRK14121.1"/>
    <property type="match status" value="1"/>
</dbReference>
<dbReference type="NCBIfam" id="TIGR00091">
    <property type="entry name" value="tRNA (guanosine(46)-N7)-methyltransferase TrmB"/>
    <property type="match status" value="1"/>
</dbReference>
<dbReference type="PANTHER" id="PTHR23417">
    <property type="entry name" value="3-DEOXY-D-MANNO-OCTULOSONIC-ACID TRANSFERASE/TRNA GUANINE-N 7 - -METHYLTRANSFERASE"/>
    <property type="match status" value="1"/>
</dbReference>
<dbReference type="PANTHER" id="PTHR23417:SF14">
    <property type="entry name" value="PENTACOTRIPEPTIDE-REPEAT REGION OF PRORP DOMAIN-CONTAINING PROTEIN"/>
    <property type="match status" value="1"/>
</dbReference>
<dbReference type="Pfam" id="PF02390">
    <property type="entry name" value="Methyltransf_4"/>
    <property type="match status" value="1"/>
</dbReference>
<dbReference type="SUPFAM" id="SSF53335">
    <property type="entry name" value="S-adenosyl-L-methionine-dependent methyltransferases"/>
    <property type="match status" value="1"/>
</dbReference>
<dbReference type="PROSITE" id="PS51625">
    <property type="entry name" value="SAM_MT_TRMB"/>
    <property type="match status" value="1"/>
</dbReference>
<evidence type="ECO:0000255" key="1">
    <source>
        <dbReference type="HAMAP-Rule" id="MF_01057"/>
    </source>
</evidence>
<sequence length="400" mass="46403">MPHFLAKLDSKPLEYPLIRGDFCFHREFLSLKHPTKSCVHASFKNDVFLLQKIRRAGDFLIKSEKATPLKREILKQALRIYSQSFEVISHNLQENSKHASQKKALDLETFEDFIQKNQAPILIEIGFGSGRHLIELAKNNPTTTCLGIEIHTPSIAQALKQIELLDLKNLHILQGDGRLVLESMPNHRCEKIFVHFPVPWNEKKHRRVLSEKFLNEALRVLKPRGFLELRTDDSLCFEDSLKLALKNFQCEIEIKKNAQIPVVSKYEARWNKLKKDIYDLKIYSLGLDENPTQNHALDFSFDTITIDKESVGAILKTPKIIKEGYFVHVCNIYENKGDFLVELSMGDFDWPVRLFVLLAENQVFYLNKSPLKTLNNHKAHLLLQNILSQKELDERDHRSE</sequence>
<comment type="function">
    <text evidence="1">Catalyzes the formation of N(7)-methylguanine at position 46 (m7G46) in tRNA.</text>
</comment>
<comment type="catalytic activity">
    <reaction evidence="1">
        <text>guanosine(46) in tRNA + S-adenosyl-L-methionine = N(7)-methylguanosine(46) in tRNA + S-adenosyl-L-homocysteine</text>
        <dbReference type="Rhea" id="RHEA:42708"/>
        <dbReference type="Rhea" id="RHEA-COMP:10188"/>
        <dbReference type="Rhea" id="RHEA-COMP:10189"/>
        <dbReference type="ChEBI" id="CHEBI:57856"/>
        <dbReference type="ChEBI" id="CHEBI:59789"/>
        <dbReference type="ChEBI" id="CHEBI:74269"/>
        <dbReference type="ChEBI" id="CHEBI:74480"/>
        <dbReference type="EC" id="2.1.1.33"/>
    </reaction>
</comment>
<comment type="pathway">
    <text evidence="1">tRNA modification; N(7)-methylguanine-tRNA biosynthesis.</text>
</comment>
<comment type="similarity">
    <text evidence="1">Belongs to the class I-like SAM-binding methyltransferase superfamily. TrmB family.</text>
</comment>
<reference key="1">
    <citation type="journal article" date="1999" name="Nature">
        <title>Genomic sequence comparison of two unrelated isolates of the human gastric pathogen Helicobacter pylori.</title>
        <authorList>
            <person name="Alm R.A."/>
            <person name="Ling L.-S.L."/>
            <person name="Moir D.T."/>
            <person name="King B.L."/>
            <person name="Brown E.D."/>
            <person name="Doig P.C."/>
            <person name="Smith D.R."/>
            <person name="Noonan B."/>
            <person name="Guild B.C."/>
            <person name="deJonge B.L."/>
            <person name="Carmel G."/>
            <person name="Tummino P.J."/>
            <person name="Caruso A."/>
            <person name="Uria-Nickelsen M."/>
            <person name="Mills D.M."/>
            <person name="Ives C."/>
            <person name="Gibson R."/>
            <person name="Merberg D."/>
            <person name="Mills S.D."/>
            <person name="Jiang Q."/>
            <person name="Taylor D.E."/>
            <person name="Vovis G.F."/>
            <person name="Trust T.J."/>
        </authorList>
    </citation>
    <scope>NUCLEOTIDE SEQUENCE [LARGE SCALE GENOMIC DNA]</scope>
    <source>
        <strain>J99 / ATCC 700824</strain>
    </source>
</reference>
<name>TRMB_HELPJ</name>
<keyword id="KW-0489">Methyltransferase</keyword>
<keyword id="KW-0949">S-adenosyl-L-methionine</keyword>
<keyword id="KW-0808">Transferase</keyword>
<keyword id="KW-0819">tRNA processing</keyword>
<feature type="chain" id="PRO_0000171336" description="tRNA (guanine-N(7)-)-methyltransferase">
    <location>
        <begin position="1"/>
        <end position="400"/>
    </location>
</feature>
<feature type="binding site" evidence="1">
    <location>
        <position position="124"/>
    </location>
    <ligand>
        <name>S-adenosyl-L-methionine</name>
        <dbReference type="ChEBI" id="CHEBI:59789"/>
    </ligand>
</feature>
<feature type="binding site" evidence="1">
    <location>
        <position position="149"/>
    </location>
    <ligand>
        <name>S-adenosyl-L-methionine</name>
        <dbReference type="ChEBI" id="CHEBI:59789"/>
    </ligand>
</feature>
<feature type="binding site" evidence="1">
    <location>
        <position position="176"/>
    </location>
    <ligand>
        <name>S-adenosyl-L-methionine</name>
        <dbReference type="ChEBI" id="CHEBI:59789"/>
    </ligand>
</feature>
<feature type="binding site" evidence="1">
    <location>
        <position position="232"/>
    </location>
    <ligand>
        <name>substrate</name>
    </ligand>
</feature>
<proteinExistence type="inferred from homology"/>
<accession>Q9ZL96</accession>
<protein>
    <recommendedName>
        <fullName evidence="1">tRNA (guanine-N(7)-)-methyltransferase</fullName>
        <ecNumber evidence="1">2.1.1.33</ecNumber>
    </recommendedName>
    <alternativeName>
        <fullName evidence="1">tRNA (guanine(46)-N(7))-methyltransferase</fullName>
    </alternativeName>
    <alternativeName>
        <fullName evidence="1">tRNA(m7G46)-methyltransferase</fullName>
    </alternativeName>
</protein>
<gene>
    <name evidence="1" type="primary">trmB</name>
    <name type="ordered locus">jhp_0684</name>
</gene>
<organism>
    <name type="scientific">Helicobacter pylori (strain J99 / ATCC 700824)</name>
    <name type="common">Campylobacter pylori J99</name>
    <dbReference type="NCBI Taxonomy" id="85963"/>
    <lineage>
        <taxon>Bacteria</taxon>
        <taxon>Pseudomonadati</taxon>
        <taxon>Campylobacterota</taxon>
        <taxon>Epsilonproteobacteria</taxon>
        <taxon>Campylobacterales</taxon>
        <taxon>Helicobacteraceae</taxon>
        <taxon>Helicobacter</taxon>
    </lineage>
</organism>